<protein>
    <recommendedName>
        <fullName evidence="1">2,3,4,5-tetrahydropyridine-2,6-dicarboxylate N-acetyltransferase</fullName>
        <ecNumber evidence="1">2.3.1.89</ecNumber>
    </recommendedName>
    <alternativeName>
        <fullName evidence="1">Tetrahydrodipicolinate N-acetyltransferase</fullName>
        <shortName evidence="1">THP acetyltransferase</shortName>
        <shortName evidence="1">Tetrahydropicolinate acetylase</shortName>
    </alternativeName>
</protein>
<evidence type="ECO:0000255" key="1">
    <source>
        <dbReference type="HAMAP-Rule" id="MF_01691"/>
    </source>
</evidence>
<organism>
    <name type="scientific">Clostridium botulinum (strain Loch Maree / Type A3)</name>
    <dbReference type="NCBI Taxonomy" id="498214"/>
    <lineage>
        <taxon>Bacteria</taxon>
        <taxon>Bacillati</taxon>
        <taxon>Bacillota</taxon>
        <taxon>Clostridia</taxon>
        <taxon>Eubacteriales</taxon>
        <taxon>Clostridiaceae</taxon>
        <taxon>Clostridium</taxon>
    </lineage>
</organism>
<name>DAPH_CLOBM</name>
<proteinExistence type="inferred from homology"/>
<reference key="1">
    <citation type="journal article" date="2007" name="PLoS ONE">
        <title>Analysis of the neurotoxin complex genes in Clostridium botulinum A1-A4 and B1 strains: BoNT/A3, /Ba4 and /B1 clusters are located within plasmids.</title>
        <authorList>
            <person name="Smith T.J."/>
            <person name="Hill K.K."/>
            <person name="Foley B.T."/>
            <person name="Detter J.C."/>
            <person name="Munk A.C."/>
            <person name="Bruce D.C."/>
            <person name="Doggett N.A."/>
            <person name="Smith L.A."/>
            <person name="Marks J.D."/>
            <person name="Xie G."/>
            <person name="Brettin T.S."/>
        </authorList>
    </citation>
    <scope>NUCLEOTIDE SEQUENCE [LARGE SCALE GENOMIC DNA]</scope>
    <source>
        <strain>Loch Maree / Type A3</strain>
    </source>
</reference>
<accession>B1L0V4</accession>
<keyword id="KW-0012">Acyltransferase</keyword>
<keyword id="KW-0028">Amino-acid biosynthesis</keyword>
<keyword id="KW-0220">Diaminopimelate biosynthesis</keyword>
<keyword id="KW-0457">Lysine biosynthesis</keyword>
<keyword id="KW-0677">Repeat</keyword>
<keyword id="KW-0808">Transferase</keyword>
<sequence>MSYNLTDPYEIARYIKEAKKSTPIKAYIEGELSNCDFTNIEKFNSGDLYILFGESEEILVIIEKNKDKIKNCRIEQDRRKSAIPLLDMLKINARIEPGAIIRDKVIIGENSVIMMGAVINIGAEIGEGTMVDMNAVVGARGKLGKNVHLGAGAVVAGVLEPPSSDPCTIEDNVLIGANAVILEGIKIGKGSVVAAGSIVTTDVPENVVVAGAPAKIIKEVDVKTKDKTKLLDDLRK</sequence>
<dbReference type="EC" id="2.3.1.89" evidence="1"/>
<dbReference type="EMBL" id="CP000962">
    <property type="protein sequence ID" value="ACA55881.1"/>
    <property type="molecule type" value="Genomic_DNA"/>
</dbReference>
<dbReference type="RefSeq" id="WP_012343805.1">
    <property type="nucleotide sequence ID" value="NC_010520.1"/>
</dbReference>
<dbReference type="SMR" id="B1L0V4"/>
<dbReference type="KEGG" id="cbl:CLK_2552"/>
<dbReference type="HOGENOM" id="CLU_103751_0_0_9"/>
<dbReference type="UniPathway" id="UPA00034">
    <property type="reaction ID" value="UER00022"/>
</dbReference>
<dbReference type="GO" id="GO:0047200">
    <property type="term" value="F:tetrahydrodipicolinate N-acetyltransferase activity"/>
    <property type="evidence" value="ECO:0007669"/>
    <property type="project" value="UniProtKB-EC"/>
</dbReference>
<dbReference type="GO" id="GO:0019877">
    <property type="term" value="P:diaminopimelate biosynthetic process"/>
    <property type="evidence" value="ECO:0007669"/>
    <property type="project" value="UniProtKB-UniRule"/>
</dbReference>
<dbReference type="GO" id="GO:0009089">
    <property type="term" value="P:lysine biosynthetic process via diaminopimelate"/>
    <property type="evidence" value="ECO:0007669"/>
    <property type="project" value="UniProtKB-UniRule"/>
</dbReference>
<dbReference type="CDD" id="cd03350">
    <property type="entry name" value="LbH_THP_succinylT"/>
    <property type="match status" value="1"/>
</dbReference>
<dbReference type="Gene3D" id="2.160.10.10">
    <property type="entry name" value="Hexapeptide repeat proteins"/>
    <property type="match status" value="1"/>
</dbReference>
<dbReference type="Gene3D" id="3.30.70.250">
    <property type="entry name" value="Malonyl-CoA ACP transacylase, ACP-binding"/>
    <property type="match status" value="1"/>
</dbReference>
<dbReference type="HAMAP" id="MF_01691">
    <property type="entry name" value="DapH"/>
    <property type="match status" value="1"/>
</dbReference>
<dbReference type="InterPro" id="IPR019873">
    <property type="entry name" value="DapH"/>
</dbReference>
<dbReference type="InterPro" id="IPR013710">
    <property type="entry name" value="DapH_N"/>
</dbReference>
<dbReference type="InterPro" id="IPR001451">
    <property type="entry name" value="Hexapep"/>
</dbReference>
<dbReference type="InterPro" id="IPR018357">
    <property type="entry name" value="Hexapep_transf_CS"/>
</dbReference>
<dbReference type="InterPro" id="IPR050179">
    <property type="entry name" value="Trans_hexapeptide_repeat"/>
</dbReference>
<dbReference type="InterPro" id="IPR011004">
    <property type="entry name" value="Trimer_LpxA-like_sf"/>
</dbReference>
<dbReference type="NCBIfam" id="TIGR03532">
    <property type="entry name" value="DapD_Ac"/>
    <property type="match status" value="1"/>
</dbReference>
<dbReference type="PANTHER" id="PTHR43300:SF10">
    <property type="entry name" value="2,3,4,5-TETRAHYDROPYRIDINE-2,6-DICARBOXYLATE N-ACETYLTRANSFERASE"/>
    <property type="match status" value="1"/>
</dbReference>
<dbReference type="PANTHER" id="PTHR43300">
    <property type="entry name" value="ACETYLTRANSFERASE"/>
    <property type="match status" value="1"/>
</dbReference>
<dbReference type="Pfam" id="PF08503">
    <property type="entry name" value="DapH_N"/>
    <property type="match status" value="1"/>
</dbReference>
<dbReference type="Pfam" id="PF14602">
    <property type="entry name" value="Hexapep_2"/>
    <property type="match status" value="2"/>
</dbReference>
<dbReference type="SUPFAM" id="SSF51161">
    <property type="entry name" value="Trimeric LpxA-like enzymes"/>
    <property type="match status" value="1"/>
</dbReference>
<dbReference type="PROSITE" id="PS00101">
    <property type="entry name" value="HEXAPEP_TRANSFERASES"/>
    <property type="match status" value="1"/>
</dbReference>
<comment type="function">
    <text evidence="1">Catalyzes the transfer of an acetyl group from acetyl-CoA to tetrahydrodipicolinate.</text>
</comment>
<comment type="catalytic activity">
    <reaction evidence="1">
        <text>(S)-2,3,4,5-tetrahydrodipicolinate + acetyl-CoA + H2O = L-2-acetamido-6-oxoheptanedioate + CoA</text>
        <dbReference type="Rhea" id="RHEA:13085"/>
        <dbReference type="ChEBI" id="CHEBI:15377"/>
        <dbReference type="ChEBI" id="CHEBI:16845"/>
        <dbReference type="ChEBI" id="CHEBI:57287"/>
        <dbReference type="ChEBI" id="CHEBI:57288"/>
        <dbReference type="ChEBI" id="CHEBI:58117"/>
        <dbReference type="EC" id="2.3.1.89"/>
    </reaction>
</comment>
<comment type="pathway">
    <text evidence="1">Amino-acid biosynthesis; L-lysine biosynthesis via DAP pathway; LL-2,6-diaminopimelate from (S)-tetrahydrodipicolinate (acetylase route): step 1/3.</text>
</comment>
<comment type="similarity">
    <text evidence="1">Belongs to the transferase hexapeptide repeat family. DapH subfamily.</text>
</comment>
<gene>
    <name evidence="1" type="primary">dapH</name>
    <name type="ordered locus">CLK_2552</name>
</gene>
<feature type="chain" id="PRO_0000376649" description="2,3,4,5-tetrahydropyridine-2,6-dicarboxylate N-acetyltransferase">
    <location>
        <begin position="1"/>
        <end position="236"/>
    </location>
</feature>